<gene>
    <name type="primary">IGFBP5</name>
</gene>
<protein>
    <recommendedName>
        <fullName>Insulin-like growth factor-binding protein 5</fullName>
        <shortName>IBP-5</shortName>
        <shortName>IGF-binding protein 5</shortName>
        <shortName>IGFBP-5</shortName>
    </recommendedName>
</protein>
<sequence>MVLTAVLLLLAACAGPAQGLGSFVHCEPCDEKALSMCPPSPLGCELVKEPGCGCCMTCALAEGQSCGVYTERCAQGLRCLPRQDEEKPLHALLHGRGVCLNEKSYREQAKIERDSREHEEPTTSEMAEETYSPKIFRPKHTRISELKAEAVKKDRRKKLTQSKFVGGAENTAHPRVILAPEMRQESEQGPCRRHMEASLQELKASPRMVPRAVYLPNCDRKGFYKRKQCKPSRGRKRGICWCVDKYGMKLPGMEYVDGDFQCHSFDSSNVE</sequence>
<reference key="1">
    <citation type="journal article" date="1996" name="Biochem. Biophys. Res. Commun.">
        <title>Molecular cloning and sequence analysis of the porcine insulin-like growth factor binding protein-5 complementary deoxyribonucleic acid.</title>
        <authorList>
            <person name="White M.E."/>
            <person name="Diao R."/>
            <person name="Hathaway M.R."/>
            <person name="Mickelson J."/>
            <person name="Dayton W.R."/>
        </authorList>
    </citation>
    <scope>NUCLEOTIDE SEQUENCE [MRNA]</scope>
    <source>
        <tissue>Skeletal muscle</tissue>
    </source>
</reference>
<reference key="2">
    <citation type="submission" date="2002-09" db="EMBL/GenBank/DDBJ databases">
        <authorList>
            <person name="White M.E."/>
            <person name="Diao R."/>
            <person name="Hathaway M.R."/>
            <person name="Mickelson J."/>
            <person name="Dayton W.R."/>
        </authorList>
    </citation>
    <scope>SEQUENCE REVISION TO 49</scope>
</reference>
<name>IBP5_PIG</name>
<feature type="signal peptide" evidence="3">
    <location>
        <begin position="1"/>
        <end position="19"/>
    </location>
</feature>
<feature type="chain" id="PRO_0000014387" description="Insulin-like growth factor-binding protein 5">
    <location>
        <begin position="20"/>
        <end position="271"/>
    </location>
</feature>
<feature type="domain" description="IGFBP N-terminal" evidence="5">
    <location>
        <begin position="22"/>
        <end position="102"/>
    </location>
</feature>
<feature type="domain" description="Thyroglobulin type-1" evidence="4">
    <location>
        <begin position="188"/>
        <end position="262"/>
    </location>
</feature>
<feature type="region of interest" description="Disordered" evidence="6">
    <location>
        <begin position="109"/>
        <end position="129"/>
    </location>
</feature>
<feature type="compositionally biased region" description="Basic and acidic residues" evidence="6">
    <location>
        <begin position="109"/>
        <end position="121"/>
    </location>
</feature>
<feature type="modified residue" description="Phosphoserine" evidence="1">
    <location>
        <position position="115"/>
    </location>
</feature>
<feature type="disulfide bond" evidence="5">
    <location>
        <begin position="26"/>
        <end position="52"/>
    </location>
</feature>
<feature type="disulfide bond" evidence="5">
    <location>
        <begin position="29"/>
        <end position="54"/>
    </location>
</feature>
<feature type="disulfide bond" evidence="5">
    <location>
        <begin position="37"/>
        <end position="55"/>
    </location>
</feature>
<feature type="disulfide bond" evidence="5">
    <location>
        <begin position="44"/>
        <end position="58"/>
    </location>
</feature>
<feature type="disulfide bond" evidence="5">
    <location>
        <begin position="66"/>
        <end position="79"/>
    </location>
</feature>
<feature type="disulfide bond" evidence="5">
    <location>
        <begin position="73"/>
        <end position="99"/>
    </location>
</feature>
<feature type="disulfide bond" evidence="4">
    <location>
        <begin position="191"/>
        <end position="218"/>
    </location>
</feature>
<feature type="disulfide bond" evidence="4">
    <location>
        <begin position="229"/>
        <end position="240"/>
    </location>
</feature>
<feature type="disulfide bond" evidence="4">
    <location>
        <begin position="242"/>
        <end position="262"/>
    </location>
</feature>
<evidence type="ECO:0000250" key="1">
    <source>
        <dbReference type="UniProtKB" id="P24593"/>
    </source>
</evidence>
<evidence type="ECO:0000250" key="2">
    <source>
        <dbReference type="UniProtKB" id="Q07079"/>
    </source>
</evidence>
<evidence type="ECO:0000255" key="3"/>
<evidence type="ECO:0000255" key="4">
    <source>
        <dbReference type="PROSITE-ProRule" id="PRU00500"/>
    </source>
</evidence>
<evidence type="ECO:0000255" key="5">
    <source>
        <dbReference type="PROSITE-ProRule" id="PRU00653"/>
    </source>
</evidence>
<evidence type="ECO:0000256" key="6">
    <source>
        <dbReference type="SAM" id="MobiDB-lite"/>
    </source>
</evidence>
<keyword id="KW-0963">Cytoplasm</keyword>
<keyword id="KW-1015">Disulfide bond</keyword>
<keyword id="KW-0340">Growth factor binding</keyword>
<keyword id="KW-0539">Nucleus</keyword>
<keyword id="KW-0597">Phosphoprotein</keyword>
<keyword id="KW-1185">Reference proteome</keyword>
<keyword id="KW-0964">Secreted</keyword>
<keyword id="KW-0732">Signal</keyword>
<comment type="function">
    <text evidence="1 2">Multifunctional protein that plays a critical role in regulating the availability of IGFs to their receptors and thereby regulates IGF-mediated cellular processes including proliferation, differentiation, and apoptosis in a cell-type specific manner. Increases the cell proliferation of osteoblasts, intestinal smooth muscle cells and neuroblastoma cells (By similarity). Enhances adhesion and survival of epithelial cells but decreases adhesion of mesenchymal cells (By similarity). Once secreted, acts as a major mediator of mTORC1-dependent feedback inhibition of IGF1 signaling (By similarity). Also plays a role in the induction of extracellular matrix (ECM) production and deposition independently of its nuclear translocation and binding to IGFs. Acts itself as a growth factor that can act independently of IGFs to regulate bone formation. Acts as a ligand for the ROR1 receptor which triggers formation of ROR1/HER2 heterodimer to enhance CREB oncogenic signaling (By similarity).</text>
</comment>
<comment type="subunit">
    <text evidence="1">Interacts with IGF1; this interaction enhances the growth stimulatory effects of IGF1 on fibroblasts. Interacts with CAV1; this interaction allows trafficking of IGFBP5 from the plasma membrane to the nucleus. Interacts with NCL; this interaction is necessary for IGFBP5 localization to the nucleus.</text>
</comment>
<comment type="subcellular location">
    <subcellularLocation>
        <location evidence="1">Secreted</location>
    </subcellularLocation>
    <subcellularLocation>
        <location evidence="1">Cytoplasm</location>
    </subcellularLocation>
    <subcellularLocation>
        <location evidence="1">Nucleus</location>
    </subcellularLocation>
</comment>
<accession>Q28985</accession>
<proteinExistence type="evidence at transcript level"/>
<organism>
    <name type="scientific">Sus scrofa</name>
    <name type="common">Pig</name>
    <dbReference type="NCBI Taxonomy" id="9823"/>
    <lineage>
        <taxon>Eukaryota</taxon>
        <taxon>Metazoa</taxon>
        <taxon>Chordata</taxon>
        <taxon>Craniata</taxon>
        <taxon>Vertebrata</taxon>
        <taxon>Euteleostomi</taxon>
        <taxon>Mammalia</taxon>
        <taxon>Eutheria</taxon>
        <taxon>Laurasiatheria</taxon>
        <taxon>Artiodactyla</taxon>
        <taxon>Suina</taxon>
        <taxon>Suidae</taxon>
        <taxon>Sus</taxon>
    </lineage>
</organism>
<dbReference type="EMBL" id="U41340">
    <property type="protein sequence ID" value="AAA87859.2"/>
    <property type="molecule type" value="mRNA"/>
</dbReference>
<dbReference type="PIR" id="JC4584">
    <property type="entry name" value="JC4584"/>
</dbReference>
<dbReference type="RefSeq" id="NP_999264.1">
    <property type="nucleotide sequence ID" value="NM_214099.1"/>
</dbReference>
<dbReference type="SMR" id="Q28985"/>
<dbReference type="FunCoup" id="Q28985">
    <property type="interactions" value="126"/>
</dbReference>
<dbReference type="STRING" id="9823.ENSSSCP00000024248"/>
<dbReference type="MEROPS" id="I31.952"/>
<dbReference type="PaxDb" id="9823-ENSSSCP00000028711"/>
<dbReference type="Ensembl" id="ENSSSCT00040063800.1">
    <property type="protein sequence ID" value="ENSSSCP00040026945.1"/>
    <property type="gene ID" value="ENSSSCG00040047315.1"/>
</dbReference>
<dbReference type="GeneID" id="397182"/>
<dbReference type="KEGG" id="ssc:397182"/>
<dbReference type="CTD" id="3488"/>
<dbReference type="eggNOG" id="ENOG502QUPK">
    <property type="taxonomic scope" value="Eukaryota"/>
</dbReference>
<dbReference type="InParanoid" id="Q28985"/>
<dbReference type="OrthoDB" id="6068400at2759"/>
<dbReference type="Proteomes" id="UP000008227">
    <property type="component" value="Unplaced"/>
</dbReference>
<dbReference type="Proteomes" id="UP000314985">
    <property type="component" value="Unplaced"/>
</dbReference>
<dbReference type="Proteomes" id="UP000694570">
    <property type="component" value="Unplaced"/>
</dbReference>
<dbReference type="Proteomes" id="UP000694571">
    <property type="component" value="Unplaced"/>
</dbReference>
<dbReference type="Proteomes" id="UP000694720">
    <property type="component" value="Unplaced"/>
</dbReference>
<dbReference type="Proteomes" id="UP000694722">
    <property type="component" value="Unplaced"/>
</dbReference>
<dbReference type="Proteomes" id="UP000694723">
    <property type="component" value="Unplaced"/>
</dbReference>
<dbReference type="Proteomes" id="UP000694724">
    <property type="component" value="Unplaced"/>
</dbReference>
<dbReference type="Proteomes" id="UP000694725">
    <property type="component" value="Unplaced"/>
</dbReference>
<dbReference type="Proteomes" id="UP000694726">
    <property type="component" value="Unplaced"/>
</dbReference>
<dbReference type="Proteomes" id="UP000694727">
    <property type="component" value="Unplaced"/>
</dbReference>
<dbReference type="Proteomes" id="UP000694728">
    <property type="component" value="Unplaced"/>
</dbReference>
<dbReference type="GO" id="GO:0005737">
    <property type="term" value="C:cytoplasm"/>
    <property type="evidence" value="ECO:0007669"/>
    <property type="project" value="UniProtKB-SubCell"/>
</dbReference>
<dbReference type="GO" id="GO:0005615">
    <property type="term" value="C:extracellular space"/>
    <property type="evidence" value="ECO:0000318"/>
    <property type="project" value="GO_Central"/>
</dbReference>
<dbReference type="GO" id="GO:0005634">
    <property type="term" value="C:nucleus"/>
    <property type="evidence" value="ECO:0007669"/>
    <property type="project" value="UniProtKB-SubCell"/>
</dbReference>
<dbReference type="GO" id="GO:0001968">
    <property type="term" value="F:fibronectin binding"/>
    <property type="evidence" value="ECO:0000318"/>
    <property type="project" value="GO_Central"/>
</dbReference>
<dbReference type="GO" id="GO:0031994">
    <property type="term" value="F:insulin-like growth factor I binding"/>
    <property type="evidence" value="ECO:0000318"/>
    <property type="project" value="GO_Central"/>
</dbReference>
<dbReference type="GO" id="GO:0031995">
    <property type="term" value="F:insulin-like growth factor II binding"/>
    <property type="evidence" value="ECO:0000318"/>
    <property type="project" value="GO_Central"/>
</dbReference>
<dbReference type="GO" id="GO:0043567">
    <property type="term" value="P:regulation of insulin-like growth factor receptor signaling pathway"/>
    <property type="evidence" value="ECO:0000318"/>
    <property type="project" value="GO_Central"/>
</dbReference>
<dbReference type="GO" id="GO:0060416">
    <property type="term" value="P:response to growth hormone"/>
    <property type="evidence" value="ECO:0000250"/>
    <property type="project" value="AgBase"/>
</dbReference>
<dbReference type="CDD" id="cd00191">
    <property type="entry name" value="TY"/>
    <property type="match status" value="1"/>
</dbReference>
<dbReference type="FunFam" id="4.10.40.20:FF:000001">
    <property type="entry name" value="Insulin-like growth factor binding protein 5"/>
    <property type="match status" value="1"/>
</dbReference>
<dbReference type="FunFam" id="4.10.800.10:FF:000005">
    <property type="entry name" value="Putative insulin-like growth factor-binding protein 5"/>
    <property type="match status" value="1"/>
</dbReference>
<dbReference type="Gene3D" id="4.10.40.20">
    <property type="match status" value="1"/>
</dbReference>
<dbReference type="Gene3D" id="4.10.800.10">
    <property type="entry name" value="Thyroglobulin type-1"/>
    <property type="match status" value="1"/>
</dbReference>
<dbReference type="InterPro" id="IPR009030">
    <property type="entry name" value="Growth_fac_rcpt_cys_sf"/>
</dbReference>
<dbReference type="InterPro" id="IPR012213">
    <property type="entry name" value="IGFBP-5"/>
</dbReference>
<dbReference type="InterPro" id="IPR000867">
    <property type="entry name" value="IGFBP-like"/>
</dbReference>
<dbReference type="InterPro" id="IPR022321">
    <property type="entry name" value="IGFBP_1-6_chordata"/>
</dbReference>
<dbReference type="InterPro" id="IPR017891">
    <property type="entry name" value="Insulin_GF-bd_Cys-rich_CS"/>
</dbReference>
<dbReference type="InterPro" id="IPR000716">
    <property type="entry name" value="Thyroglobulin_1"/>
</dbReference>
<dbReference type="InterPro" id="IPR036857">
    <property type="entry name" value="Thyroglobulin_1_sf"/>
</dbReference>
<dbReference type="PANTHER" id="PTHR11551">
    <property type="entry name" value="INSULIN-LIKE GROWTH FACTOR BINDING PROTEIN"/>
    <property type="match status" value="1"/>
</dbReference>
<dbReference type="PANTHER" id="PTHR11551:SF4">
    <property type="entry name" value="INSULIN-LIKE GROWTH FACTOR-BINDING PROTEIN 5"/>
    <property type="match status" value="1"/>
</dbReference>
<dbReference type="Pfam" id="PF00219">
    <property type="entry name" value="IGFBP"/>
    <property type="match status" value="1"/>
</dbReference>
<dbReference type="Pfam" id="PF00086">
    <property type="entry name" value="Thyroglobulin_1"/>
    <property type="match status" value="1"/>
</dbReference>
<dbReference type="PRINTS" id="PR01976">
    <property type="entry name" value="IGFBPFAMILY"/>
</dbReference>
<dbReference type="PRINTS" id="PR01981">
    <property type="entry name" value="IGFBPFAMILY5"/>
</dbReference>
<dbReference type="SMART" id="SM00121">
    <property type="entry name" value="IB"/>
    <property type="match status" value="1"/>
</dbReference>
<dbReference type="SMART" id="SM00211">
    <property type="entry name" value="TY"/>
    <property type="match status" value="1"/>
</dbReference>
<dbReference type="SUPFAM" id="SSF57184">
    <property type="entry name" value="Growth factor receptor domain"/>
    <property type="match status" value="1"/>
</dbReference>
<dbReference type="SUPFAM" id="SSF57610">
    <property type="entry name" value="Thyroglobulin type-1 domain"/>
    <property type="match status" value="1"/>
</dbReference>
<dbReference type="PROSITE" id="PS00222">
    <property type="entry name" value="IGFBP_N_1"/>
    <property type="match status" value="1"/>
</dbReference>
<dbReference type="PROSITE" id="PS51323">
    <property type="entry name" value="IGFBP_N_2"/>
    <property type="match status" value="1"/>
</dbReference>
<dbReference type="PROSITE" id="PS00484">
    <property type="entry name" value="THYROGLOBULIN_1_1"/>
    <property type="match status" value="1"/>
</dbReference>
<dbReference type="PROSITE" id="PS51162">
    <property type="entry name" value="THYROGLOBULIN_1_2"/>
    <property type="match status" value="1"/>
</dbReference>